<accession>B5FQJ5</accession>
<comment type="function">
    <text evidence="1">Forms part of the ribosomal stalk which helps the ribosome interact with GTP-bound translation factors.</text>
</comment>
<comment type="subunit">
    <text evidence="1">Part of the ribosomal stalk of the 50S ribosomal subunit. Interacts with L10 and the large rRNA to form the base of the stalk. L10 forms an elongated spine to which L12 dimers bind in a sequential fashion forming a multimeric L10(L12)X complex.</text>
</comment>
<comment type="PTM">
    <text evidence="1">One or more lysine residues are methylated.</text>
</comment>
<comment type="similarity">
    <text evidence="1">Belongs to the universal ribosomal protein uL11 family.</text>
</comment>
<dbReference type="EMBL" id="CP001144">
    <property type="protein sequence ID" value="ACH73897.1"/>
    <property type="molecule type" value="Genomic_DNA"/>
</dbReference>
<dbReference type="RefSeq" id="WP_001085926.1">
    <property type="nucleotide sequence ID" value="NC_011205.1"/>
</dbReference>
<dbReference type="SMR" id="B5FQJ5"/>
<dbReference type="GeneID" id="93777911"/>
<dbReference type="KEGG" id="sed:SeD_A4555"/>
<dbReference type="HOGENOM" id="CLU_074237_2_0_6"/>
<dbReference type="Proteomes" id="UP000008322">
    <property type="component" value="Chromosome"/>
</dbReference>
<dbReference type="GO" id="GO:0022625">
    <property type="term" value="C:cytosolic large ribosomal subunit"/>
    <property type="evidence" value="ECO:0007669"/>
    <property type="project" value="TreeGrafter"/>
</dbReference>
<dbReference type="GO" id="GO:0070180">
    <property type="term" value="F:large ribosomal subunit rRNA binding"/>
    <property type="evidence" value="ECO:0007669"/>
    <property type="project" value="UniProtKB-UniRule"/>
</dbReference>
<dbReference type="GO" id="GO:0003735">
    <property type="term" value="F:structural constituent of ribosome"/>
    <property type="evidence" value="ECO:0007669"/>
    <property type="project" value="InterPro"/>
</dbReference>
<dbReference type="GO" id="GO:0006412">
    <property type="term" value="P:translation"/>
    <property type="evidence" value="ECO:0007669"/>
    <property type="project" value="UniProtKB-UniRule"/>
</dbReference>
<dbReference type="CDD" id="cd00349">
    <property type="entry name" value="Ribosomal_L11"/>
    <property type="match status" value="1"/>
</dbReference>
<dbReference type="FunFam" id="1.10.10.250:FF:000001">
    <property type="entry name" value="50S ribosomal protein L11"/>
    <property type="match status" value="1"/>
</dbReference>
<dbReference type="FunFam" id="3.30.1550.10:FF:000001">
    <property type="entry name" value="50S ribosomal protein L11"/>
    <property type="match status" value="1"/>
</dbReference>
<dbReference type="Gene3D" id="1.10.10.250">
    <property type="entry name" value="Ribosomal protein L11, C-terminal domain"/>
    <property type="match status" value="1"/>
</dbReference>
<dbReference type="Gene3D" id="3.30.1550.10">
    <property type="entry name" value="Ribosomal protein L11/L12, N-terminal domain"/>
    <property type="match status" value="1"/>
</dbReference>
<dbReference type="HAMAP" id="MF_00736">
    <property type="entry name" value="Ribosomal_uL11"/>
    <property type="match status" value="1"/>
</dbReference>
<dbReference type="InterPro" id="IPR000911">
    <property type="entry name" value="Ribosomal_uL11"/>
</dbReference>
<dbReference type="InterPro" id="IPR006519">
    <property type="entry name" value="Ribosomal_uL11_bac-typ"/>
</dbReference>
<dbReference type="InterPro" id="IPR020783">
    <property type="entry name" value="Ribosomal_uL11_C"/>
</dbReference>
<dbReference type="InterPro" id="IPR036769">
    <property type="entry name" value="Ribosomal_uL11_C_sf"/>
</dbReference>
<dbReference type="InterPro" id="IPR020785">
    <property type="entry name" value="Ribosomal_uL11_CS"/>
</dbReference>
<dbReference type="InterPro" id="IPR020784">
    <property type="entry name" value="Ribosomal_uL11_N"/>
</dbReference>
<dbReference type="InterPro" id="IPR036796">
    <property type="entry name" value="Ribosomal_uL11_N_sf"/>
</dbReference>
<dbReference type="NCBIfam" id="TIGR01632">
    <property type="entry name" value="L11_bact"/>
    <property type="match status" value="1"/>
</dbReference>
<dbReference type="PANTHER" id="PTHR11661">
    <property type="entry name" value="60S RIBOSOMAL PROTEIN L12"/>
    <property type="match status" value="1"/>
</dbReference>
<dbReference type="PANTHER" id="PTHR11661:SF1">
    <property type="entry name" value="LARGE RIBOSOMAL SUBUNIT PROTEIN UL11M"/>
    <property type="match status" value="1"/>
</dbReference>
<dbReference type="Pfam" id="PF00298">
    <property type="entry name" value="Ribosomal_L11"/>
    <property type="match status" value="1"/>
</dbReference>
<dbReference type="Pfam" id="PF03946">
    <property type="entry name" value="Ribosomal_L11_N"/>
    <property type="match status" value="1"/>
</dbReference>
<dbReference type="SMART" id="SM00649">
    <property type="entry name" value="RL11"/>
    <property type="match status" value="1"/>
</dbReference>
<dbReference type="SUPFAM" id="SSF54747">
    <property type="entry name" value="Ribosomal L11/L12e N-terminal domain"/>
    <property type="match status" value="1"/>
</dbReference>
<dbReference type="SUPFAM" id="SSF46906">
    <property type="entry name" value="Ribosomal protein L11, C-terminal domain"/>
    <property type="match status" value="1"/>
</dbReference>
<dbReference type="PROSITE" id="PS00359">
    <property type="entry name" value="RIBOSOMAL_L11"/>
    <property type="match status" value="1"/>
</dbReference>
<keyword id="KW-0488">Methylation</keyword>
<keyword id="KW-0687">Ribonucleoprotein</keyword>
<keyword id="KW-0689">Ribosomal protein</keyword>
<keyword id="KW-0694">RNA-binding</keyword>
<keyword id="KW-0699">rRNA-binding</keyword>
<feature type="chain" id="PRO_1000195705" description="Large ribosomal subunit protein uL11">
    <location>
        <begin position="1"/>
        <end position="142"/>
    </location>
</feature>
<proteinExistence type="inferred from homology"/>
<evidence type="ECO:0000255" key="1">
    <source>
        <dbReference type="HAMAP-Rule" id="MF_00736"/>
    </source>
</evidence>
<evidence type="ECO:0000305" key="2"/>
<reference key="1">
    <citation type="journal article" date="2011" name="J. Bacteriol.">
        <title>Comparative genomics of 28 Salmonella enterica isolates: evidence for CRISPR-mediated adaptive sublineage evolution.</title>
        <authorList>
            <person name="Fricke W.F."/>
            <person name="Mammel M.K."/>
            <person name="McDermott P.F."/>
            <person name="Tartera C."/>
            <person name="White D.G."/>
            <person name="Leclerc J.E."/>
            <person name="Ravel J."/>
            <person name="Cebula T.A."/>
        </authorList>
    </citation>
    <scope>NUCLEOTIDE SEQUENCE [LARGE SCALE GENOMIC DNA]</scope>
    <source>
        <strain>CT_02021853</strain>
    </source>
</reference>
<sequence>MAKKVQAYVKLQVAAGMANPSPPVGPALGQQGVNIMEFCKAFNAKTDSIEKGLPIPVVITVYADRSFTFVTKTPPAAVLLKKAAGIKSGSGKPNKDKVGKISRAQLQEIAQTKAADMTGADIEAMTRSIEGTARSMGLVVED</sequence>
<name>RL11_SALDC</name>
<organism>
    <name type="scientific">Salmonella dublin (strain CT_02021853)</name>
    <dbReference type="NCBI Taxonomy" id="439851"/>
    <lineage>
        <taxon>Bacteria</taxon>
        <taxon>Pseudomonadati</taxon>
        <taxon>Pseudomonadota</taxon>
        <taxon>Gammaproteobacteria</taxon>
        <taxon>Enterobacterales</taxon>
        <taxon>Enterobacteriaceae</taxon>
        <taxon>Salmonella</taxon>
    </lineage>
</organism>
<protein>
    <recommendedName>
        <fullName evidence="1">Large ribosomal subunit protein uL11</fullName>
    </recommendedName>
    <alternativeName>
        <fullName evidence="2">50S ribosomal protein L11</fullName>
    </alternativeName>
</protein>
<gene>
    <name evidence="1" type="primary">rplK</name>
    <name type="ordered locus">SeD_A4555</name>
</gene>